<proteinExistence type="inferred from homology"/>
<organism>
    <name type="scientific">Methanocella arvoryzae (strain DSM 22066 / NBRC 105507 / MRE50)</name>
    <dbReference type="NCBI Taxonomy" id="351160"/>
    <lineage>
        <taxon>Archaea</taxon>
        <taxon>Methanobacteriati</taxon>
        <taxon>Methanobacteriota</taxon>
        <taxon>Stenosarchaea group</taxon>
        <taxon>Methanomicrobia</taxon>
        <taxon>Methanocellales</taxon>
        <taxon>Methanocellaceae</taxon>
        <taxon>Methanocella</taxon>
    </lineage>
</organism>
<keyword id="KW-0235">DNA replication</keyword>
<keyword id="KW-0240">DNA-directed RNA polymerase</keyword>
<keyword id="KW-0271">Exosome</keyword>
<keyword id="KW-0460">Magnesium</keyword>
<keyword id="KW-0479">Metal-binding</keyword>
<keyword id="KW-0548">Nucleotidyltransferase</keyword>
<keyword id="KW-0639">Primosome</keyword>
<keyword id="KW-1185">Reference proteome</keyword>
<keyword id="KW-0804">Transcription</keyword>
<keyword id="KW-0808">Transferase</keyword>
<comment type="function">
    <text evidence="1">RNA polymerase that catalyzes the synthesis of short RNA molecules used as primers for DNA polymerase during DNA replication. Also part of the exosome, which is a complex involved in RNA degradation. Acts as a poly(A)-binding protein that enhances the interaction between heteromeric, adenine-rich transcripts and the exosome.</text>
</comment>
<comment type="catalytic activity">
    <reaction evidence="1">
        <text>ssDNA + n NTP = ssDNA/pppN(pN)n-1 hybrid + (n-1) diphosphate.</text>
        <dbReference type="EC" id="2.7.7.101"/>
    </reaction>
</comment>
<comment type="cofactor">
    <cofactor evidence="1">
        <name>Mg(2+)</name>
        <dbReference type="ChEBI" id="CHEBI:18420"/>
    </cofactor>
    <text evidence="1">Binds two Mg(2+) per subunit.</text>
</comment>
<comment type="subunit">
    <text evidence="1">Forms a ternary complex with MCM helicase and DNA. Component of the archaeal exosome complex.</text>
</comment>
<comment type="similarity">
    <text evidence="1">Belongs to the archaeal DnaG primase family.</text>
</comment>
<feature type="chain" id="PRO_1000000568" description="DNA primase DnaG">
    <location>
        <begin position="1"/>
        <end position="481"/>
    </location>
</feature>
<feature type="domain" description="Toprim" evidence="1">
    <location>
        <begin position="169"/>
        <end position="243"/>
    </location>
</feature>
<feature type="region of interest" description="Disordered" evidence="2">
    <location>
        <begin position="275"/>
        <end position="393"/>
    </location>
</feature>
<feature type="compositionally biased region" description="Low complexity" evidence="2">
    <location>
        <begin position="281"/>
        <end position="309"/>
    </location>
</feature>
<feature type="compositionally biased region" description="Basic and acidic residues" evidence="2">
    <location>
        <begin position="312"/>
        <end position="393"/>
    </location>
</feature>
<feature type="binding site" evidence="1">
    <location>
        <position position="175"/>
    </location>
    <ligand>
        <name>Mg(2+)</name>
        <dbReference type="ChEBI" id="CHEBI:18420"/>
        <label>1</label>
        <note>catalytic</note>
    </ligand>
</feature>
<feature type="binding site" evidence="1">
    <location>
        <position position="217"/>
    </location>
    <ligand>
        <name>Mg(2+)</name>
        <dbReference type="ChEBI" id="CHEBI:18420"/>
        <label>1</label>
        <note>catalytic</note>
    </ligand>
</feature>
<feature type="binding site" evidence="1">
    <location>
        <position position="217"/>
    </location>
    <ligand>
        <name>Mg(2+)</name>
        <dbReference type="ChEBI" id="CHEBI:18420"/>
        <label>2</label>
    </ligand>
</feature>
<feature type="binding site" evidence="1">
    <location>
        <position position="219"/>
    </location>
    <ligand>
        <name>Mg(2+)</name>
        <dbReference type="ChEBI" id="CHEBI:18420"/>
        <label>2</label>
    </ligand>
</feature>
<gene>
    <name evidence="1" type="primary">dnaG</name>
    <name type="ordered locus">UNCMA_24310</name>
    <name type="ORF">RCIX283</name>
</gene>
<protein>
    <recommendedName>
        <fullName evidence="1">DNA primase DnaG</fullName>
        <ecNumber evidence="1">2.7.7.101</ecNumber>
    </recommendedName>
</protein>
<name>DNAG_METAR</name>
<sequence>MEESDTTKYVIHAHISAEGVVERPDVVGAVFGQTEGLLGADLDLRELQKTGRIGRIEVNITSKYGKSNGNILIPSSLDKVETSILAAALETIDRVGPCISKITVTKIEDVRSSKRKQIIDRAKHILTDMFDNSVPESQEITDAVKAAVRVEEVTFIDNLPAGPNVLDSDAILVVEGRADVLNLLKYGIKNAIAVEGTNVPQLVAELSKKKTVTVFTDGDRGGELILKELLQVADVDYVARAPDGKGVEELTQKEVVKSLRSKVPVEQVIEVPQGRRRNKLAAQAAEKQAQAEAAQKAEAPAAAAPVQPQREYQQKEYPQRESRERSEQPRGEVPRRKSLRRTEEQQERPERPERSERAERREYRERREYREPREPREQREQAPARKEREPSEFDEMMKELSGTLSARLLDANKNVINTVAVRDLANTLKESNGDVKSVVFDGVITQRMLDIAAEKNLETLVGVKMGSVVKQPAGVKVITTE</sequence>
<dbReference type="EC" id="2.7.7.101" evidence="1"/>
<dbReference type="EMBL" id="AM114193">
    <property type="protein sequence ID" value="CAJ35750.1"/>
    <property type="molecule type" value="Genomic_DNA"/>
</dbReference>
<dbReference type="RefSeq" id="WP_012036749.1">
    <property type="nucleotide sequence ID" value="NC_009464.1"/>
</dbReference>
<dbReference type="SMR" id="Q0W793"/>
<dbReference type="STRING" id="351160.RCIX283"/>
<dbReference type="GeneID" id="5143803"/>
<dbReference type="KEGG" id="rci:RCIX283"/>
<dbReference type="PATRIC" id="fig|351160.9.peg.2485"/>
<dbReference type="eggNOG" id="arCOG04281">
    <property type="taxonomic scope" value="Archaea"/>
</dbReference>
<dbReference type="OrthoDB" id="8643at2157"/>
<dbReference type="Proteomes" id="UP000000663">
    <property type="component" value="Chromosome"/>
</dbReference>
<dbReference type="GO" id="GO:0005737">
    <property type="term" value="C:cytoplasm"/>
    <property type="evidence" value="ECO:0007669"/>
    <property type="project" value="TreeGrafter"/>
</dbReference>
<dbReference type="GO" id="GO:0000428">
    <property type="term" value="C:DNA-directed RNA polymerase complex"/>
    <property type="evidence" value="ECO:0007669"/>
    <property type="project" value="UniProtKB-KW"/>
</dbReference>
<dbReference type="GO" id="GO:0000178">
    <property type="term" value="C:exosome (RNase complex)"/>
    <property type="evidence" value="ECO:0007669"/>
    <property type="project" value="UniProtKB-KW"/>
</dbReference>
<dbReference type="GO" id="GO:1990077">
    <property type="term" value="C:primosome complex"/>
    <property type="evidence" value="ECO:0007669"/>
    <property type="project" value="UniProtKB-KW"/>
</dbReference>
<dbReference type="GO" id="GO:0003899">
    <property type="term" value="F:DNA-directed RNA polymerase activity"/>
    <property type="evidence" value="ECO:0007669"/>
    <property type="project" value="InterPro"/>
</dbReference>
<dbReference type="GO" id="GO:0046872">
    <property type="term" value="F:metal ion binding"/>
    <property type="evidence" value="ECO:0007669"/>
    <property type="project" value="UniProtKB-KW"/>
</dbReference>
<dbReference type="GO" id="GO:0008143">
    <property type="term" value="F:poly(A) binding"/>
    <property type="evidence" value="ECO:0007669"/>
    <property type="project" value="InterPro"/>
</dbReference>
<dbReference type="GO" id="GO:0006269">
    <property type="term" value="P:DNA replication, synthesis of primer"/>
    <property type="evidence" value="ECO:0007669"/>
    <property type="project" value="UniProtKB-UniRule"/>
</dbReference>
<dbReference type="CDD" id="cd01029">
    <property type="entry name" value="TOPRIM_primases"/>
    <property type="match status" value="1"/>
</dbReference>
<dbReference type="FunFam" id="3.40.1360.10:FF:000010">
    <property type="entry name" value="DNA primase DnaG"/>
    <property type="match status" value="1"/>
</dbReference>
<dbReference type="Gene3D" id="3.40.1360.10">
    <property type="match status" value="1"/>
</dbReference>
<dbReference type="HAMAP" id="MF_00007">
    <property type="entry name" value="DNA_primase_DnaG_arc"/>
    <property type="match status" value="1"/>
</dbReference>
<dbReference type="InterPro" id="IPR050219">
    <property type="entry name" value="DnaG_primase"/>
</dbReference>
<dbReference type="InterPro" id="IPR020607">
    <property type="entry name" value="Primase_DnaG_arc"/>
</dbReference>
<dbReference type="InterPro" id="IPR034154">
    <property type="entry name" value="TOPRIM_DnaG/twinkle"/>
</dbReference>
<dbReference type="InterPro" id="IPR006171">
    <property type="entry name" value="TOPRIM_dom"/>
</dbReference>
<dbReference type="NCBIfam" id="NF003108">
    <property type="entry name" value="PRK04031.1-1"/>
    <property type="match status" value="1"/>
</dbReference>
<dbReference type="PANTHER" id="PTHR30313">
    <property type="entry name" value="DNA PRIMASE"/>
    <property type="match status" value="1"/>
</dbReference>
<dbReference type="PANTHER" id="PTHR30313:SF2">
    <property type="entry name" value="DNA PRIMASE"/>
    <property type="match status" value="1"/>
</dbReference>
<dbReference type="Pfam" id="PF13662">
    <property type="entry name" value="Toprim_4"/>
    <property type="match status" value="1"/>
</dbReference>
<dbReference type="SMART" id="SM00493">
    <property type="entry name" value="TOPRIM"/>
    <property type="match status" value="1"/>
</dbReference>
<dbReference type="SUPFAM" id="SSF56731">
    <property type="entry name" value="DNA primase core"/>
    <property type="match status" value="1"/>
</dbReference>
<dbReference type="PROSITE" id="PS50880">
    <property type="entry name" value="TOPRIM"/>
    <property type="match status" value="1"/>
</dbReference>
<accession>Q0W793</accession>
<evidence type="ECO:0000255" key="1">
    <source>
        <dbReference type="HAMAP-Rule" id="MF_00007"/>
    </source>
</evidence>
<evidence type="ECO:0000256" key="2">
    <source>
        <dbReference type="SAM" id="MobiDB-lite"/>
    </source>
</evidence>
<reference key="1">
    <citation type="journal article" date="2006" name="Science">
        <title>Genome of rice cluster I archaea -- the key methane producers in the rice rhizosphere.</title>
        <authorList>
            <person name="Erkel C."/>
            <person name="Kube M."/>
            <person name="Reinhardt R."/>
            <person name="Liesack W."/>
        </authorList>
    </citation>
    <scope>NUCLEOTIDE SEQUENCE [LARGE SCALE GENOMIC DNA]</scope>
    <source>
        <strain>DSM 22066 / NBRC 105507 / MRE50</strain>
    </source>
</reference>